<proteinExistence type="inferred from homology"/>
<gene>
    <name evidence="1" type="primary">ligA</name>
    <name type="synonym">lig</name>
    <name type="ordered locus">SA1720</name>
</gene>
<feature type="chain" id="PRO_0000161758" description="DNA ligase">
    <location>
        <begin position="1"/>
        <end position="667"/>
    </location>
</feature>
<feature type="domain" description="BRCT" evidence="1">
    <location>
        <begin position="586"/>
        <end position="667"/>
    </location>
</feature>
<feature type="active site" description="N6-AMP-lysine intermediate" evidence="1">
    <location>
        <position position="112"/>
    </location>
</feature>
<feature type="binding site" evidence="1">
    <location>
        <begin position="32"/>
        <end position="36"/>
    </location>
    <ligand>
        <name>NAD(+)</name>
        <dbReference type="ChEBI" id="CHEBI:57540"/>
    </ligand>
</feature>
<feature type="binding site" evidence="1">
    <location>
        <begin position="81"/>
        <end position="82"/>
    </location>
    <ligand>
        <name>NAD(+)</name>
        <dbReference type="ChEBI" id="CHEBI:57540"/>
    </ligand>
</feature>
<feature type="binding site" evidence="1">
    <location>
        <position position="110"/>
    </location>
    <ligand>
        <name>NAD(+)</name>
        <dbReference type="ChEBI" id="CHEBI:57540"/>
    </ligand>
</feature>
<feature type="binding site" evidence="1">
    <location>
        <position position="133"/>
    </location>
    <ligand>
        <name>NAD(+)</name>
        <dbReference type="ChEBI" id="CHEBI:57540"/>
    </ligand>
</feature>
<feature type="binding site" evidence="1">
    <location>
        <position position="167"/>
    </location>
    <ligand>
        <name>NAD(+)</name>
        <dbReference type="ChEBI" id="CHEBI:57540"/>
    </ligand>
</feature>
<feature type="binding site" evidence="1">
    <location>
        <position position="283"/>
    </location>
    <ligand>
        <name>NAD(+)</name>
        <dbReference type="ChEBI" id="CHEBI:57540"/>
    </ligand>
</feature>
<feature type="binding site" evidence="1">
    <location>
        <position position="307"/>
    </location>
    <ligand>
        <name>NAD(+)</name>
        <dbReference type="ChEBI" id="CHEBI:57540"/>
    </ligand>
</feature>
<feature type="binding site" evidence="1">
    <location>
        <position position="401"/>
    </location>
    <ligand>
        <name>Zn(2+)</name>
        <dbReference type="ChEBI" id="CHEBI:29105"/>
    </ligand>
</feature>
<feature type="binding site" evidence="1">
    <location>
        <position position="404"/>
    </location>
    <ligand>
        <name>Zn(2+)</name>
        <dbReference type="ChEBI" id="CHEBI:29105"/>
    </ligand>
</feature>
<feature type="binding site" evidence="1">
    <location>
        <position position="419"/>
    </location>
    <ligand>
        <name>Zn(2+)</name>
        <dbReference type="ChEBI" id="CHEBI:29105"/>
    </ligand>
</feature>
<feature type="binding site" evidence="1">
    <location>
        <position position="424"/>
    </location>
    <ligand>
        <name>Zn(2+)</name>
        <dbReference type="ChEBI" id="CHEBI:29105"/>
    </ligand>
</feature>
<comment type="function">
    <text evidence="1">DNA ligase that catalyzes the formation of phosphodiester linkages between 5'-phosphoryl and 3'-hydroxyl groups in double-stranded DNA using NAD as a coenzyme and as the energy source for the reaction. It is essential for DNA replication and repair of damaged DNA.</text>
</comment>
<comment type="catalytic activity">
    <reaction evidence="1">
        <text>NAD(+) + (deoxyribonucleotide)n-3'-hydroxyl + 5'-phospho-(deoxyribonucleotide)m = (deoxyribonucleotide)n+m + AMP + beta-nicotinamide D-nucleotide.</text>
        <dbReference type="EC" id="6.5.1.2"/>
    </reaction>
</comment>
<comment type="cofactor">
    <cofactor evidence="1">
        <name>Mg(2+)</name>
        <dbReference type="ChEBI" id="CHEBI:18420"/>
    </cofactor>
    <cofactor evidence="1">
        <name>Mn(2+)</name>
        <dbReference type="ChEBI" id="CHEBI:29035"/>
    </cofactor>
</comment>
<comment type="similarity">
    <text evidence="1">Belongs to the NAD-dependent DNA ligase family. LigA subfamily.</text>
</comment>
<accession>Q7A4Q5</accession>
<dbReference type="EC" id="6.5.1.2" evidence="1"/>
<dbReference type="EMBL" id="BA000018">
    <property type="protein sequence ID" value="BAB42990.1"/>
    <property type="molecule type" value="Genomic_DNA"/>
</dbReference>
<dbReference type="PIR" id="G89978">
    <property type="entry name" value="G89978"/>
</dbReference>
<dbReference type="RefSeq" id="WP_000774556.1">
    <property type="nucleotide sequence ID" value="NC_002745.2"/>
</dbReference>
<dbReference type="SMR" id="Q7A4Q5"/>
<dbReference type="EnsemblBacteria" id="BAB42990">
    <property type="protein sequence ID" value="BAB42990"/>
    <property type="gene ID" value="BAB42990"/>
</dbReference>
<dbReference type="KEGG" id="sau:SA1720"/>
<dbReference type="HOGENOM" id="CLU_007764_2_1_9"/>
<dbReference type="GO" id="GO:0005829">
    <property type="term" value="C:cytosol"/>
    <property type="evidence" value="ECO:0007669"/>
    <property type="project" value="TreeGrafter"/>
</dbReference>
<dbReference type="GO" id="GO:0003677">
    <property type="term" value="F:DNA binding"/>
    <property type="evidence" value="ECO:0007669"/>
    <property type="project" value="InterPro"/>
</dbReference>
<dbReference type="GO" id="GO:0003911">
    <property type="term" value="F:DNA ligase (NAD+) activity"/>
    <property type="evidence" value="ECO:0007669"/>
    <property type="project" value="UniProtKB-UniRule"/>
</dbReference>
<dbReference type="GO" id="GO:0046872">
    <property type="term" value="F:metal ion binding"/>
    <property type="evidence" value="ECO:0007669"/>
    <property type="project" value="UniProtKB-KW"/>
</dbReference>
<dbReference type="GO" id="GO:0006281">
    <property type="term" value="P:DNA repair"/>
    <property type="evidence" value="ECO:0007669"/>
    <property type="project" value="UniProtKB-KW"/>
</dbReference>
<dbReference type="GO" id="GO:0006260">
    <property type="term" value="P:DNA replication"/>
    <property type="evidence" value="ECO:0007669"/>
    <property type="project" value="UniProtKB-KW"/>
</dbReference>
<dbReference type="CDD" id="cd17748">
    <property type="entry name" value="BRCT_DNA_ligase_like"/>
    <property type="match status" value="1"/>
</dbReference>
<dbReference type="CDD" id="cd00114">
    <property type="entry name" value="LIGANc"/>
    <property type="match status" value="1"/>
</dbReference>
<dbReference type="FunFam" id="1.10.150.20:FF:000006">
    <property type="entry name" value="DNA ligase"/>
    <property type="match status" value="1"/>
</dbReference>
<dbReference type="FunFam" id="1.10.150.20:FF:000007">
    <property type="entry name" value="DNA ligase"/>
    <property type="match status" value="1"/>
</dbReference>
<dbReference type="FunFam" id="1.10.287.610:FF:000005">
    <property type="entry name" value="DNA ligase"/>
    <property type="match status" value="1"/>
</dbReference>
<dbReference type="FunFam" id="2.40.50.140:FF:000012">
    <property type="entry name" value="DNA ligase"/>
    <property type="match status" value="1"/>
</dbReference>
<dbReference type="FunFam" id="3.30.470.30:FF:000001">
    <property type="entry name" value="DNA ligase"/>
    <property type="match status" value="1"/>
</dbReference>
<dbReference type="FunFam" id="3.40.50.10190:FF:000045">
    <property type="entry name" value="DNA ligase"/>
    <property type="match status" value="1"/>
</dbReference>
<dbReference type="FunFam" id="6.20.10.30:FF:000002">
    <property type="entry name" value="DNA ligase"/>
    <property type="match status" value="1"/>
</dbReference>
<dbReference type="Gene3D" id="6.20.10.30">
    <property type="match status" value="1"/>
</dbReference>
<dbReference type="Gene3D" id="1.10.150.20">
    <property type="entry name" value="5' to 3' exonuclease, C-terminal subdomain"/>
    <property type="match status" value="2"/>
</dbReference>
<dbReference type="Gene3D" id="3.40.50.10190">
    <property type="entry name" value="BRCT domain"/>
    <property type="match status" value="1"/>
</dbReference>
<dbReference type="Gene3D" id="3.30.470.30">
    <property type="entry name" value="DNA ligase/mRNA capping enzyme"/>
    <property type="match status" value="1"/>
</dbReference>
<dbReference type="Gene3D" id="1.10.287.610">
    <property type="entry name" value="Helix hairpin bin"/>
    <property type="match status" value="1"/>
</dbReference>
<dbReference type="Gene3D" id="2.40.50.140">
    <property type="entry name" value="Nucleic acid-binding proteins"/>
    <property type="match status" value="1"/>
</dbReference>
<dbReference type="HAMAP" id="MF_01588">
    <property type="entry name" value="DNA_ligase_A"/>
    <property type="match status" value="1"/>
</dbReference>
<dbReference type="InterPro" id="IPR001357">
    <property type="entry name" value="BRCT_dom"/>
</dbReference>
<dbReference type="InterPro" id="IPR036420">
    <property type="entry name" value="BRCT_dom_sf"/>
</dbReference>
<dbReference type="InterPro" id="IPR041663">
    <property type="entry name" value="DisA/LigA_HHH"/>
</dbReference>
<dbReference type="InterPro" id="IPR001679">
    <property type="entry name" value="DNA_ligase"/>
</dbReference>
<dbReference type="InterPro" id="IPR018239">
    <property type="entry name" value="DNA_ligase_AS"/>
</dbReference>
<dbReference type="InterPro" id="IPR033136">
    <property type="entry name" value="DNA_ligase_CS"/>
</dbReference>
<dbReference type="InterPro" id="IPR013839">
    <property type="entry name" value="DNAligase_adenylation"/>
</dbReference>
<dbReference type="InterPro" id="IPR013840">
    <property type="entry name" value="DNAligase_N"/>
</dbReference>
<dbReference type="InterPro" id="IPR003583">
    <property type="entry name" value="Hlx-hairpin-Hlx_DNA-bd_motif"/>
</dbReference>
<dbReference type="InterPro" id="IPR012340">
    <property type="entry name" value="NA-bd_OB-fold"/>
</dbReference>
<dbReference type="InterPro" id="IPR004150">
    <property type="entry name" value="NAD_DNA_ligase_OB"/>
</dbReference>
<dbReference type="InterPro" id="IPR010994">
    <property type="entry name" value="RuvA_2-like"/>
</dbReference>
<dbReference type="InterPro" id="IPR004149">
    <property type="entry name" value="Znf_DNAligase_C4"/>
</dbReference>
<dbReference type="NCBIfam" id="TIGR00575">
    <property type="entry name" value="dnlj"/>
    <property type="match status" value="1"/>
</dbReference>
<dbReference type="NCBIfam" id="NF005932">
    <property type="entry name" value="PRK07956.1"/>
    <property type="match status" value="1"/>
</dbReference>
<dbReference type="PANTHER" id="PTHR23389">
    <property type="entry name" value="CHROMOSOME TRANSMISSION FIDELITY FACTOR 18"/>
    <property type="match status" value="1"/>
</dbReference>
<dbReference type="PANTHER" id="PTHR23389:SF9">
    <property type="entry name" value="DNA LIGASE"/>
    <property type="match status" value="1"/>
</dbReference>
<dbReference type="Pfam" id="PF00533">
    <property type="entry name" value="BRCT"/>
    <property type="match status" value="1"/>
</dbReference>
<dbReference type="Pfam" id="PF01653">
    <property type="entry name" value="DNA_ligase_aden"/>
    <property type="match status" value="1"/>
</dbReference>
<dbReference type="Pfam" id="PF03120">
    <property type="entry name" value="DNA_ligase_OB"/>
    <property type="match status" value="1"/>
</dbReference>
<dbReference type="Pfam" id="PF03119">
    <property type="entry name" value="DNA_ligase_ZBD"/>
    <property type="match status" value="1"/>
</dbReference>
<dbReference type="Pfam" id="PF12826">
    <property type="entry name" value="HHH_2"/>
    <property type="match status" value="1"/>
</dbReference>
<dbReference type="PIRSF" id="PIRSF001604">
    <property type="entry name" value="LigA"/>
    <property type="match status" value="1"/>
</dbReference>
<dbReference type="SMART" id="SM00292">
    <property type="entry name" value="BRCT"/>
    <property type="match status" value="1"/>
</dbReference>
<dbReference type="SMART" id="SM00278">
    <property type="entry name" value="HhH1"/>
    <property type="match status" value="3"/>
</dbReference>
<dbReference type="SMART" id="SM00532">
    <property type="entry name" value="LIGANc"/>
    <property type="match status" value="1"/>
</dbReference>
<dbReference type="SUPFAM" id="SSF52113">
    <property type="entry name" value="BRCT domain"/>
    <property type="match status" value="1"/>
</dbReference>
<dbReference type="SUPFAM" id="SSF56091">
    <property type="entry name" value="DNA ligase/mRNA capping enzyme, catalytic domain"/>
    <property type="match status" value="1"/>
</dbReference>
<dbReference type="SUPFAM" id="SSF50249">
    <property type="entry name" value="Nucleic acid-binding proteins"/>
    <property type="match status" value="1"/>
</dbReference>
<dbReference type="SUPFAM" id="SSF47781">
    <property type="entry name" value="RuvA domain 2-like"/>
    <property type="match status" value="1"/>
</dbReference>
<dbReference type="PROSITE" id="PS50172">
    <property type="entry name" value="BRCT"/>
    <property type="match status" value="1"/>
</dbReference>
<dbReference type="PROSITE" id="PS01055">
    <property type="entry name" value="DNA_LIGASE_N1"/>
    <property type="match status" value="1"/>
</dbReference>
<dbReference type="PROSITE" id="PS01056">
    <property type="entry name" value="DNA_LIGASE_N2"/>
    <property type="match status" value="1"/>
</dbReference>
<evidence type="ECO:0000255" key="1">
    <source>
        <dbReference type="HAMAP-Rule" id="MF_01588"/>
    </source>
</evidence>
<reference key="1">
    <citation type="journal article" date="2001" name="Lancet">
        <title>Whole genome sequencing of meticillin-resistant Staphylococcus aureus.</title>
        <authorList>
            <person name="Kuroda M."/>
            <person name="Ohta T."/>
            <person name="Uchiyama I."/>
            <person name="Baba T."/>
            <person name="Yuzawa H."/>
            <person name="Kobayashi I."/>
            <person name="Cui L."/>
            <person name="Oguchi A."/>
            <person name="Aoki K."/>
            <person name="Nagai Y."/>
            <person name="Lian J.-Q."/>
            <person name="Ito T."/>
            <person name="Kanamori M."/>
            <person name="Matsumaru H."/>
            <person name="Maruyama A."/>
            <person name="Murakami H."/>
            <person name="Hosoyama A."/>
            <person name="Mizutani-Ui Y."/>
            <person name="Takahashi N.K."/>
            <person name="Sawano T."/>
            <person name="Inoue R."/>
            <person name="Kaito C."/>
            <person name="Sekimizu K."/>
            <person name="Hirakawa H."/>
            <person name="Kuhara S."/>
            <person name="Goto S."/>
            <person name="Yabuzaki J."/>
            <person name="Kanehisa M."/>
            <person name="Yamashita A."/>
            <person name="Oshima K."/>
            <person name="Furuya K."/>
            <person name="Yoshino C."/>
            <person name="Shiba T."/>
            <person name="Hattori M."/>
            <person name="Ogasawara N."/>
            <person name="Hayashi H."/>
            <person name="Hiramatsu K."/>
        </authorList>
    </citation>
    <scope>NUCLEOTIDE SEQUENCE [LARGE SCALE GENOMIC DNA]</scope>
    <source>
        <strain>N315</strain>
    </source>
</reference>
<keyword id="KW-0227">DNA damage</keyword>
<keyword id="KW-0234">DNA repair</keyword>
<keyword id="KW-0235">DNA replication</keyword>
<keyword id="KW-0436">Ligase</keyword>
<keyword id="KW-0460">Magnesium</keyword>
<keyword id="KW-0464">Manganese</keyword>
<keyword id="KW-0479">Metal-binding</keyword>
<keyword id="KW-0520">NAD</keyword>
<keyword id="KW-0862">Zinc</keyword>
<sequence>MADLSSRVNELHDLLNQYSYEYYVEDNPSVPDSEYDKLLHELIKIEEEHPEYKTVDSPTVRVGGEAQASFKKVNHDTPMLSLGNAFNEDDLRKFDQRIREQIGNVEYMCELKIDGLAVSLKYVDGYFVQGLTRGDGTTGEDITENLKTIHAIPLKMKEPLNVEVRGEAYMPRRSFLRLNEEKEKNDEQLFANPRNAAAGSLRQLDSKLTAKRKLSVFIYSVNDFTDFNARSQSEALDELDKLGFTTNKNRARVNNIDGVLEYIEKWTSQRESLPYDIDGIVIKVNDLDQQDEMGFTQKSPRWAIAYKFPAEEVVTKLLDIELSIGRTGVVTPTAILEPVKVAGTTVSRASLHNEDLIHDRDIRIGDSVVVKKAGDIIPEVVRSIPERRPEDAVTYHMPTHCPSCGHELVRIEGEVALRCINPKCQAQLVEGLIHFVSRQAMNIDGLGTKIIQQLYQSELIKDVADIFYLTEEDLLPLDRMGQKKVDNLLAAIQQAKDNSLENLLFGLGIRHLGVKASQVLAEKYETIDRLLTVTEAELVEIHDIGDKVAQSVVTYLENEDIRALIQKLKDKHVNMIYKGIKTSDIEGHPEFSGKTIVLTGKLHQMTRNEASKWLASQGAKVTSSVTKNTDVVIAGEDAGSKLTKAQSLGIEIWTEQQFVDKQNELNS</sequence>
<organism>
    <name type="scientific">Staphylococcus aureus (strain N315)</name>
    <dbReference type="NCBI Taxonomy" id="158879"/>
    <lineage>
        <taxon>Bacteria</taxon>
        <taxon>Bacillati</taxon>
        <taxon>Bacillota</taxon>
        <taxon>Bacilli</taxon>
        <taxon>Bacillales</taxon>
        <taxon>Staphylococcaceae</taxon>
        <taxon>Staphylococcus</taxon>
    </lineage>
</organism>
<name>DNLJ_STAAN</name>
<protein>
    <recommendedName>
        <fullName evidence="1">DNA ligase</fullName>
        <ecNumber evidence="1">6.5.1.2</ecNumber>
    </recommendedName>
    <alternativeName>
        <fullName evidence="1">Polydeoxyribonucleotide synthase [NAD(+)]</fullName>
    </alternativeName>
</protein>